<reference key="1">
    <citation type="submission" date="1999-07" db="EMBL/GenBank/DDBJ databases">
        <title>Molecular cloning and sequence analysis of genomic DNA fragments amplified enzymatically for phenylalanine ammonia lyase and caffeic acid O-methyltransferase from Eucalyptus globulus.</title>
        <authorList>
            <person name="De Melis L.E."/>
            <person name="Whiteman P.H."/>
            <person name="Stevenson T.W."/>
        </authorList>
    </citation>
    <scope>NUCLEOTIDE SEQUENCE [GENOMIC DNA]</scope>
</reference>
<organism>
    <name type="scientific">Eucalyptus globulus</name>
    <name type="common">Tasmanian blue gum</name>
    <dbReference type="NCBI Taxonomy" id="34317"/>
    <lineage>
        <taxon>Eukaryota</taxon>
        <taxon>Viridiplantae</taxon>
        <taxon>Streptophyta</taxon>
        <taxon>Embryophyta</taxon>
        <taxon>Tracheophyta</taxon>
        <taxon>Spermatophyta</taxon>
        <taxon>Magnoliopsida</taxon>
        <taxon>eudicotyledons</taxon>
        <taxon>Gunneridae</taxon>
        <taxon>Pentapetalae</taxon>
        <taxon>rosids</taxon>
        <taxon>malvids</taxon>
        <taxon>Myrtales</taxon>
        <taxon>Myrtaceae</taxon>
        <taxon>Myrtoideae</taxon>
        <taxon>Eucalypteae</taxon>
        <taxon>Eucalyptus</taxon>
    </lineage>
</organism>
<name>COMT1_EUCGL</name>
<feature type="chain" id="PRO_0000063201" description="Caffeic acid 3-O-methyltransferase">
    <location>
        <begin position="1" status="less than"/>
        <end position="313" status="greater than"/>
    </location>
</feature>
<feature type="region of interest" description="Substrate binding" evidence="1">
    <location>
        <begin position="144"/>
        <end position="162"/>
    </location>
</feature>
<feature type="active site" description="Proton acceptor" evidence="2">
    <location>
        <position position="251"/>
    </location>
</feature>
<feature type="binding site" evidence="1">
    <location>
        <begin position="112"/>
        <end position="118"/>
    </location>
    <ligand>
        <name>substrate</name>
    </ligand>
</feature>
<feature type="binding site" evidence="2">
    <location>
        <position position="190"/>
    </location>
    <ligand>
        <name>S-adenosyl-L-methionine</name>
        <dbReference type="ChEBI" id="CHEBI:59789"/>
    </ligand>
</feature>
<feature type="binding site" evidence="2">
    <location>
        <position position="213"/>
    </location>
    <ligand>
        <name>S-adenosyl-L-methionine</name>
        <dbReference type="ChEBI" id="CHEBI:59789"/>
    </ligand>
</feature>
<feature type="binding site" evidence="2">
    <location>
        <position position="233"/>
    </location>
    <ligand>
        <name>S-adenosyl-L-methionine</name>
        <dbReference type="ChEBI" id="CHEBI:59789"/>
    </ligand>
</feature>
<feature type="binding site" evidence="2">
    <location>
        <position position="234"/>
    </location>
    <ligand>
        <name>S-adenosyl-L-methionine</name>
        <dbReference type="ChEBI" id="CHEBI:59789"/>
    </ligand>
</feature>
<feature type="binding site" evidence="2">
    <location>
        <position position="247"/>
    </location>
    <ligand>
        <name>S-adenosyl-L-methionine</name>
        <dbReference type="ChEBI" id="CHEBI:59789"/>
    </ligand>
</feature>
<feature type="non-terminal residue">
    <location>
        <position position="1"/>
    </location>
</feature>
<feature type="non-terminal residue">
    <location>
        <position position="313"/>
    </location>
</feature>
<accession>Q9SWC2</accession>
<sequence>ANLFAMQLATASVLPAVLTAAIELDLLEIMARAGPGAYLTPGEVASQLPTQNPDAPVMLDRIFRLLASYSVLTCTLCDLPEGKVERLYGLAPLCKFLVKNEDGVSLAPLRLIDQDRVFLESWYYMKDAILEGGIPFHKAHGMTAFDYPGTDPRFNKIFNRAMSDHSTIMMKKILETYNGFEGLKTVVDVGGGTGAILNMIVAKYPSIKGINFDLPHVIEDAPSYPGVEHVGGDMFVNIPNGDAVFMKWICHDWSDEHCAKLLKNCYDALPVNGRVIVAEYILPAYPDQSLSTKGVIHMDCIMLTHFSGGKERT</sequence>
<gene>
    <name type="primary">COMT1</name>
</gene>
<dbReference type="EC" id="2.1.1.68"/>
<dbReference type="EMBL" id="AF168776">
    <property type="protein sequence ID" value="AAD50439.1"/>
    <property type="molecule type" value="Genomic_DNA"/>
</dbReference>
<dbReference type="SMR" id="Q9SWC2"/>
<dbReference type="UniPathway" id="UPA00711"/>
<dbReference type="GO" id="GO:0047763">
    <property type="term" value="F:caffeate O-methyltransferase activity"/>
    <property type="evidence" value="ECO:0007669"/>
    <property type="project" value="UniProtKB-EC"/>
</dbReference>
<dbReference type="GO" id="GO:0046983">
    <property type="term" value="F:protein dimerization activity"/>
    <property type="evidence" value="ECO:0007669"/>
    <property type="project" value="InterPro"/>
</dbReference>
<dbReference type="GO" id="GO:0009809">
    <property type="term" value="P:lignin biosynthetic process"/>
    <property type="evidence" value="ECO:0007669"/>
    <property type="project" value="UniProtKB-KW"/>
</dbReference>
<dbReference type="GO" id="GO:0032259">
    <property type="term" value="P:methylation"/>
    <property type="evidence" value="ECO:0007669"/>
    <property type="project" value="UniProtKB-KW"/>
</dbReference>
<dbReference type="CDD" id="cd02440">
    <property type="entry name" value="AdoMet_MTases"/>
    <property type="match status" value="1"/>
</dbReference>
<dbReference type="FunFam" id="1.10.10.10:FF:000357">
    <property type="entry name" value="Caffeic acid 3-O-methyltransferase"/>
    <property type="match status" value="1"/>
</dbReference>
<dbReference type="FunFam" id="3.40.50.150:FF:000061">
    <property type="entry name" value="Caffeic acid O-methyltransferase"/>
    <property type="match status" value="1"/>
</dbReference>
<dbReference type="Gene3D" id="3.40.50.150">
    <property type="entry name" value="Vaccinia Virus protein VP39"/>
    <property type="match status" value="1"/>
</dbReference>
<dbReference type="Gene3D" id="1.10.10.10">
    <property type="entry name" value="Winged helix-like DNA-binding domain superfamily/Winged helix DNA-binding domain"/>
    <property type="match status" value="1"/>
</dbReference>
<dbReference type="InterPro" id="IPR016461">
    <property type="entry name" value="COMT-like"/>
</dbReference>
<dbReference type="InterPro" id="IPR001077">
    <property type="entry name" value="O_MeTrfase_dom"/>
</dbReference>
<dbReference type="InterPro" id="IPR012967">
    <property type="entry name" value="Plant_O-MeTrfase_dimerisation"/>
</dbReference>
<dbReference type="InterPro" id="IPR029063">
    <property type="entry name" value="SAM-dependent_MTases_sf"/>
</dbReference>
<dbReference type="InterPro" id="IPR036388">
    <property type="entry name" value="WH-like_DNA-bd_sf"/>
</dbReference>
<dbReference type="InterPro" id="IPR036390">
    <property type="entry name" value="WH_DNA-bd_sf"/>
</dbReference>
<dbReference type="PANTHER" id="PTHR11746">
    <property type="entry name" value="O-METHYLTRANSFERASE"/>
    <property type="match status" value="1"/>
</dbReference>
<dbReference type="Pfam" id="PF08100">
    <property type="entry name" value="Dimerisation"/>
    <property type="match status" value="1"/>
</dbReference>
<dbReference type="Pfam" id="PF00891">
    <property type="entry name" value="Methyltransf_2"/>
    <property type="match status" value="1"/>
</dbReference>
<dbReference type="PIRSF" id="PIRSF005739">
    <property type="entry name" value="O-mtase"/>
    <property type="match status" value="1"/>
</dbReference>
<dbReference type="SUPFAM" id="SSF53335">
    <property type="entry name" value="S-adenosyl-L-methionine-dependent methyltransferases"/>
    <property type="match status" value="1"/>
</dbReference>
<dbReference type="SUPFAM" id="SSF46785">
    <property type="entry name" value="Winged helix' DNA-binding domain"/>
    <property type="match status" value="1"/>
</dbReference>
<dbReference type="PROSITE" id="PS51683">
    <property type="entry name" value="SAM_OMT_II"/>
    <property type="match status" value="1"/>
</dbReference>
<evidence type="ECO:0000250" key="1"/>
<evidence type="ECO:0000255" key="2">
    <source>
        <dbReference type="PROSITE-ProRule" id="PRU01020"/>
    </source>
</evidence>
<comment type="function">
    <text>Catalyzes the conversion of caffeic acid to ferulic acid and of 5-hydroxyferulic acid to sinapic acid. The resulting products may subsequently be converted to the corresponding alcohols that are incorporated into lignins.</text>
</comment>
<comment type="catalytic activity">
    <reaction>
        <text>(E)-caffeate + S-adenosyl-L-methionine = (E)-ferulate + S-adenosyl-L-homocysteine + H(+)</text>
        <dbReference type="Rhea" id="RHEA:20225"/>
        <dbReference type="ChEBI" id="CHEBI:15378"/>
        <dbReference type="ChEBI" id="CHEBI:29749"/>
        <dbReference type="ChEBI" id="CHEBI:57770"/>
        <dbReference type="ChEBI" id="CHEBI:57856"/>
        <dbReference type="ChEBI" id="CHEBI:59789"/>
        <dbReference type="EC" id="2.1.1.68"/>
    </reaction>
</comment>
<comment type="pathway">
    <text>Aromatic compound metabolism; phenylpropanoid biosynthesis.</text>
</comment>
<comment type="subunit">
    <text evidence="1">Homodimer.</text>
</comment>
<comment type="similarity">
    <text evidence="2">Belongs to the class I-like SAM-binding methyltransferase superfamily. Cation-independent O-methyltransferase family. COMT subfamily.</text>
</comment>
<keyword id="KW-0438">Lignin biosynthesis</keyword>
<keyword id="KW-0489">Methyltransferase</keyword>
<keyword id="KW-0949">S-adenosyl-L-methionine</keyword>
<keyword id="KW-0808">Transferase</keyword>
<proteinExistence type="inferred from homology"/>
<protein>
    <recommendedName>
        <fullName>Caffeic acid 3-O-methyltransferase</fullName>
        <shortName>CAOMT</shortName>
        <shortName>COMT</shortName>
        <ecNumber>2.1.1.68</ecNumber>
    </recommendedName>
    <alternativeName>
        <fullName>S-adenosysl-L-methionine:caffeic acid 3-O-methyltransferase</fullName>
    </alternativeName>
</protein>